<evidence type="ECO:0000255" key="1">
    <source>
        <dbReference type="HAMAP-Rule" id="MF_00305"/>
    </source>
</evidence>
<protein>
    <recommendedName>
        <fullName evidence="1">Signal recognition particle 19 kDa protein</fullName>
        <shortName evidence="1">SRP19</shortName>
    </recommendedName>
</protein>
<feature type="chain" id="PRO_0000322227" description="Signal recognition particle 19 kDa protein">
    <location>
        <begin position="1"/>
        <end position="89"/>
    </location>
</feature>
<accession>A4FX62</accession>
<reference key="1">
    <citation type="submission" date="2007-03" db="EMBL/GenBank/DDBJ databases">
        <title>Complete sequence of chromosome of Methanococcus maripaludis C5.</title>
        <authorList>
            <consortium name="US DOE Joint Genome Institute"/>
            <person name="Copeland A."/>
            <person name="Lucas S."/>
            <person name="Lapidus A."/>
            <person name="Barry K."/>
            <person name="Glavina del Rio T."/>
            <person name="Dalin E."/>
            <person name="Tice H."/>
            <person name="Pitluck S."/>
            <person name="Chertkov O."/>
            <person name="Brettin T."/>
            <person name="Bruce D."/>
            <person name="Han C."/>
            <person name="Detter J.C."/>
            <person name="Schmutz J."/>
            <person name="Larimer F."/>
            <person name="Land M."/>
            <person name="Hauser L."/>
            <person name="Kyrpides N."/>
            <person name="Mikhailova N."/>
            <person name="Sieprawska-Lupa M."/>
            <person name="Whitman W.B."/>
            <person name="Richardson P."/>
        </authorList>
    </citation>
    <scope>NUCLEOTIDE SEQUENCE [LARGE SCALE GENOMIC DNA]</scope>
    <source>
        <strain>C5 / ATCC BAA-1333</strain>
    </source>
</reference>
<name>SRP19_METM5</name>
<proteinExistence type="inferred from homology"/>
<sequence>MKEMIIWPAYIDLKRTKNEGRKVPKEFAVQNPKLKDIAGKLKKMGLEYSIEHKKSYPKDPWEICGYIKVKADKRTSKLQILKEICKNMG</sequence>
<dbReference type="EMBL" id="CP000609">
    <property type="protein sequence ID" value="ABO34791.1"/>
    <property type="molecule type" value="Genomic_DNA"/>
</dbReference>
<dbReference type="RefSeq" id="WP_011868246.1">
    <property type="nucleotide sequence ID" value="NC_009135.1"/>
</dbReference>
<dbReference type="SMR" id="A4FX62"/>
<dbReference type="STRING" id="402880.MmarC5_0477"/>
<dbReference type="GeneID" id="4927946"/>
<dbReference type="KEGG" id="mmq:MmarC5_0477"/>
<dbReference type="eggNOG" id="arCOG01217">
    <property type="taxonomic scope" value="Archaea"/>
</dbReference>
<dbReference type="HOGENOM" id="CLU_169299_1_0_2"/>
<dbReference type="OrthoDB" id="56356at2157"/>
<dbReference type="Proteomes" id="UP000000253">
    <property type="component" value="Chromosome"/>
</dbReference>
<dbReference type="GO" id="GO:0048500">
    <property type="term" value="C:signal recognition particle"/>
    <property type="evidence" value="ECO:0007669"/>
    <property type="project" value="UniProtKB-UniRule"/>
</dbReference>
<dbReference type="GO" id="GO:0008312">
    <property type="term" value="F:7S RNA binding"/>
    <property type="evidence" value="ECO:0007669"/>
    <property type="project" value="UniProtKB-UniRule"/>
</dbReference>
<dbReference type="GO" id="GO:0006617">
    <property type="term" value="P:SRP-dependent cotranslational protein targeting to membrane, signal sequence recognition"/>
    <property type="evidence" value="ECO:0007669"/>
    <property type="project" value="TreeGrafter"/>
</dbReference>
<dbReference type="Gene3D" id="3.30.56.30">
    <property type="entry name" value="Signal recognition particle, SRP19-like subunit"/>
    <property type="match status" value="1"/>
</dbReference>
<dbReference type="HAMAP" id="MF_00305">
    <property type="entry name" value="SRP19"/>
    <property type="match status" value="1"/>
</dbReference>
<dbReference type="InterPro" id="IPR002778">
    <property type="entry name" value="Signal_recog_particle_SRP19"/>
</dbReference>
<dbReference type="InterPro" id="IPR036521">
    <property type="entry name" value="SRP19-like_sf"/>
</dbReference>
<dbReference type="InterPro" id="IPR022938">
    <property type="entry name" value="SRP19_arc-type"/>
</dbReference>
<dbReference type="PANTHER" id="PTHR17453">
    <property type="entry name" value="SIGNAL RECOGNITION PARTICLE 19 KD PROTEIN"/>
    <property type="match status" value="1"/>
</dbReference>
<dbReference type="PANTHER" id="PTHR17453:SF0">
    <property type="entry name" value="SIGNAL RECOGNITION PARTICLE 19 KDA PROTEIN"/>
    <property type="match status" value="1"/>
</dbReference>
<dbReference type="Pfam" id="PF01922">
    <property type="entry name" value="SRP19"/>
    <property type="match status" value="1"/>
</dbReference>
<dbReference type="SUPFAM" id="SSF69695">
    <property type="entry name" value="SRP19"/>
    <property type="match status" value="1"/>
</dbReference>
<keyword id="KW-0963">Cytoplasm</keyword>
<keyword id="KW-0687">Ribonucleoprotein</keyword>
<keyword id="KW-0694">RNA-binding</keyword>
<keyword id="KW-0733">Signal recognition particle</keyword>
<comment type="function">
    <text evidence="1">Involved in targeting and insertion of nascent membrane proteins into the cytoplasmic membrane. Binds directly to 7S RNA and mediates binding of the 54 kDa subunit of the SRP.</text>
</comment>
<comment type="subunit">
    <text evidence="1">Part of the signal recognition particle protein translocation system, which is composed of SRP and FtsY. Archaeal SRP consists of a 7S RNA molecule of 300 nucleotides and two protein subunits: SRP54 and SRP19.</text>
</comment>
<comment type="subcellular location">
    <subcellularLocation>
        <location evidence="1">Cytoplasm</location>
    </subcellularLocation>
</comment>
<comment type="similarity">
    <text evidence="1">Belongs to the SRP19 family.</text>
</comment>
<gene>
    <name evidence="1" type="primary">srp19</name>
    <name type="ordered locus">MmarC5_0477</name>
</gene>
<organism>
    <name type="scientific">Methanococcus maripaludis (strain C5 / ATCC BAA-1333)</name>
    <dbReference type="NCBI Taxonomy" id="402880"/>
    <lineage>
        <taxon>Archaea</taxon>
        <taxon>Methanobacteriati</taxon>
        <taxon>Methanobacteriota</taxon>
        <taxon>Methanomada group</taxon>
        <taxon>Methanococci</taxon>
        <taxon>Methanococcales</taxon>
        <taxon>Methanococcaceae</taxon>
        <taxon>Methanococcus</taxon>
    </lineage>
</organism>